<organism>
    <name type="scientific">Magnetococcus marinus (strain ATCC BAA-1437 / JCM 17883 / MC-1)</name>
    <dbReference type="NCBI Taxonomy" id="156889"/>
    <lineage>
        <taxon>Bacteria</taxon>
        <taxon>Pseudomonadati</taxon>
        <taxon>Pseudomonadota</taxon>
        <taxon>Alphaproteobacteria</taxon>
        <taxon>Magnetococcales</taxon>
        <taxon>Magnetococcaceae</taxon>
        <taxon>Magnetococcus</taxon>
    </lineage>
</organism>
<sequence>MRHKAHPGPDLELECALLRSNRAIKTLCGVDEAGRGPLCGPVVAAAVVLDLDNLPVGLNDSKQLSAKKREQLFEQIYVTSQVGVGEASVAEIDALNILHASMLAMVRAVTALQGRLVVDHALIDGNRVPATLPVPGQAVVKGDAKSLSIAAASIIAKVTRDRIMAELDRDYPHYGWAKSQGYPTQAHLQALALHGVTPHHRRSFKPVKQLLPH</sequence>
<name>RNH2_MAGMM</name>
<dbReference type="EC" id="3.1.26.4" evidence="1"/>
<dbReference type="EMBL" id="CP000471">
    <property type="protein sequence ID" value="ABK43033.1"/>
    <property type="molecule type" value="Genomic_DNA"/>
</dbReference>
<dbReference type="RefSeq" id="WP_011712200.1">
    <property type="nucleotide sequence ID" value="NC_008576.1"/>
</dbReference>
<dbReference type="SMR" id="A0L4Z0"/>
<dbReference type="STRING" id="156889.Mmc1_0508"/>
<dbReference type="KEGG" id="mgm:Mmc1_0508"/>
<dbReference type="eggNOG" id="COG0164">
    <property type="taxonomic scope" value="Bacteria"/>
</dbReference>
<dbReference type="HOGENOM" id="CLU_036532_3_2_5"/>
<dbReference type="Proteomes" id="UP000002586">
    <property type="component" value="Chromosome"/>
</dbReference>
<dbReference type="GO" id="GO:0005737">
    <property type="term" value="C:cytoplasm"/>
    <property type="evidence" value="ECO:0007669"/>
    <property type="project" value="UniProtKB-SubCell"/>
</dbReference>
<dbReference type="GO" id="GO:0032299">
    <property type="term" value="C:ribonuclease H2 complex"/>
    <property type="evidence" value="ECO:0007669"/>
    <property type="project" value="TreeGrafter"/>
</dbReference>
<dbReference type="GO" id="GO:0030145">
    <property type="term" value="F:manganese ion binding"/>
    <property type="evidence" value="ECO:0007669"/>
    <property type="project" value="UniProtKB-UniRule"/>
</dbReference>
<dbReference type="GO" id="GO:0003723">
    <property type="term" value="F:RNA binding"/>
    <property type="evidence" value="ECO:0007669"/>
    <property type="project" value="InterPro"/>
</dbReference>
<dbReference type="GO" id="GO:0004523">
    <property type="term" value="F:RNA-DNA hybrid ribonuclease activity"/>
    <property type="evidence" value="ECO:0007669"/>
    <property type="project" value="UniProtKB-UniRule"/>
</dbReference>
<dbReference type="GO" id="GO:0043137">
    <property type="term" value="P:DNA replication, removal of RNA primer"/>
    <property type="evidence" value="ECO:0007669"/>
    <property type="project" value="TreeGrafter"/>
</dbReference>
<dbReference type="GO" id="GO:0006298">
    <property type="term" value="P:mismatch repair"/>
    <property type="evidence" value="ECO:0007669"/>
    <property type="project" value="TreeGrafter"/>
</dbReference>
<dbReference type="CDD" id="cd07182">
    <property type="entry name" value="RNase_HII_bacteria_HII_like"/>
    <property type="match status" value="1"/>
</dbReference>
<dbReference type="FunFam" id="3.30.420.10:FF:000006">
    <property type="entry name" value="Ribonuclease HII"/>
    <property type="match status" value="1"/>
</dbReference>
<dbReference type="Gene3D" id="3.30.420.10">
    <property type="entry name" value="Ribonuclease H-like superfamily/Ribonuclease H"/>
    <property type="match status" value="1"/>
</dbReference>
<dbReference type="HAMAP" id="MF_00052_B">
    <property type="entry name" value="RNase_HII_B"/>
    <property type="match status" value="1"/>
</dbReference>
<dbReference type="InterPro" id="IPR022898">
    <property type="entry name" value="RNase_HII"/>
</dbReference>
<dbReference type="InterPro" id="IPR001352">
    <property type="entry name" value="RNase_HII/HIII"/>
</dbReference>
<dbReference type="InterPro" id="IPR024567">
    <property type="entry name" value="RNase_HII/HIII_dom"/>
</dbReference>
<dbReference type="InterPro" id="IPR012337">
    <property type="entry name" value="RNaseH-like_sf"/>
</dbReference>
<dbReference type="InterPro" id="IPR036397">
    <property type="entry name" value="RNaseH_sf"/>
</dbReference>
<dbReference type="NCBIfam" id="NF000595">
    <property type="entry name" value="PRK00015.1-3"/>
    <property type="match status" value="1"/>
</dbReference>
<dbReference type="NCBIfam" id="NF000596">
    <property type="entry name" value="PRK00015.1-4"/>
    <property type="match status" value="1"/>
</dbReference>
<dbReference type="PANTHER" id="PTHR10954">
    <property type="entry name" value="RIBONUCLEASE H2 SUBUNIT A"/>
    <property type="match status" value="1"/>
</dbReference>
<dbReference type="PANTHER" id="PTHR10954:SF18">
    <property type="entry name" value="RIBONUCLEASE HII"/>
    <property type="match status" value="1"/>
</dbReference>
<dbReference type="Pfam" id="PF01351">
    <property type="entry name" value="RNase_HII"/>
    <property type="match status" value="1"/>
</dbReference>
<dbReference type="SUPFAM" id="SSF53098">
    <property type="entry name" value="Ribonuclease H-like"/>
    <property type="match status" value="1"/>
</dbReference>
<dbReference type="PROSITE" id="PS51975">
    <property type="entry name" value="RNASE_H_2"/>
    <property type="match status" value="1"/>
</dbReference>
<protein>
    <recommendedName>
        <fullName evidence="1">Ribonuclease HII</fullName>
        <shortName evidence="1">RNase HII</shortName>
        <ecNumber evidence="1">3.1.26.4</ecNumber>
    </recommendedName>
</protein>
<evidence type="ECO:0000255" key="1">
    <source>
        <dbReference type="HAMAP-Rule" id="MF_00052"/>
    </source>
</evidence>
<evidence type="ECO:0000255" key="2">
    <source>
        <dbReference type="PROSITE-ProRule" id="PRU01319"/>
    </source>
</evidence>
<proteinExistence type="inferred from homology"/>
<feature type="chain" id="PRO_0000334915" description="Ribonuclease HII">
    <location>
        <begin position="1"/>
        <end position="213"/>
    </location>
</feature>
<feature type="domain" description="RNase H type-2" evidence="2">
    <location>
        <begin position="25"/>
        <end position="213"/>
    </location>
</feature>
<feature type="binding site" evidence="1">
    <location>
        <position position="31"/>
    </location>
    <ligand>
        <name>a divalent metal cation</name>
        <dbReference type="ChEBI" id="CHEBI:60240"/>
    </ligand>
</feature>
<feature type="binding site" evidence="1">
    <location>
        <position position="32"/>
    </location>
    <ligand>
        <name>a divalent metal cation</name>
        <dbReference type="ChEBI" id="CHEBI:60240"/>
    </ligand>
</feature>
<feature type="binding site" evidence="1">
    <location>
        <position position="124"/>
    </location>
    <ligand>
        <name>a divalent metal cation</name>
        <dbReference type="ChEBI" id="CHEBI:60240"/>
    </ligand>
</feature>
<reference key="1">
    <citation type="journal article" date="2009" name="Appl. Environ. Microbiol.">
        <title>Complete genome sequence of the chemolithoautotrophic marine magnetotactic coccus strain MC-1.</title>
        <authorList>
            <person name="Schubbe S."/>
            <person name="Williams T.J."/>
            <person name="Xie G."/>
            <person name="Kiss H.E."/>
            <person name="Brettin T.S."/>
            <person name="Martinez D."/>
            <person name="Ross C.A."/>
            <person name="Schuler D."/>
            <person name="Cox B.L."/>
            <person name="Nealson K.H."/>
            <person name="Bazylinski D.A."/>
        </authorList>
    </citation>
    <scope>NUCLEOTIDE SEQUENCE [LARGE SCALE GENOMIC DNA]</scope>
    <source>
        <strain>ATCC BAA-1437 / JCM 17883 / MC-1</strain>
    </source>
</reference>
<keyword id="KW-0963">Cytoplasm</keyword>
<keyword id="KW-0255">Endonuclease</keyword>
<keyword id="KW-0378">Hydrolase</keyword>
<keyword id="KW-0464">Manganese</keyword>
<keyword id="KW-0479">Metal-binding</keyword>
<keyword id="KW-0540">Nuclease</keyword>
<keyword id="KW-1185">Reference proteome</keyword>
<comment type="function">
    <text evidence="1">Endonuclease that specifically degrades the RNA of RNA-DNA hybrids.</text>
</comment>
<comment type="catalytic activity">
    <reaction evidence="1">
        <text>Endonucleolytic cleavage to 5'-phosphomonoester.</text>
        <dbReference type="EC" id="3.1.26.4"/>
    </reaction>
</comment>
<comment type="cofactor">
    <cofactor evidence="1">
        <name>Mn(2+)</name>
        <dbReference type="ChEBI" id="CHEBI:29035"/>
    </cofactor>
    <cofactor evidence="1">
        <name>Mg(2+)</name>
        <dbReference type="ChEBI" id="CHEBI:18420"/>
    </cofactor>
    <text evidence="1">Manganese or magnesium. Binds 1 divalent metal ion per monomer in the absence of substrate. May bind a second metal ion after substrate binding.</text>
</comment>
<comment type="subcellular location">
    <subcellularLocation>
        <location evidence="1">Cytoplasm</location>
    </subcellularLocation>
</comment>
<comment type="similarity">
    <text evidence="1">Belongs to the RNase HII family.</text>
</comment>
<gene>
    <name evidence="1" type="primary">rnhB</name>
    <name type="ordered locus">Mmc1_0508</name>
</gene>
<accession>A0L4Z0</accession>